<comment type="function">
    <text evidence="1">Putative tyrosine recombinase. Not involved in the cutting and rejoining of the recombining DNA molecules on dif(SL) site.</text>
</comment>
<comment type="subcellular location">
    <subcellularLocation>
        <location evidence="1">Cytoplasm</location>
    </subcellularLocation>
</comment>
<comment type="similarity">
    <text evidence="1">Belongs to the 'phage' integrase family. XerD-like subfamily.</text>
</comment>
<comment type="caution">
    <text evidence="4">Although named XerD by PubMed:11763967, it is not the ortholog of XerD and constitutes a distinct protein family. In contrast to the classic XerD protein, it does not contain the Arg-His-Arg-His (R-H-R-H) sandwich residues that are clustered with the Tyr active site. It also lacks the C-terminal region which is known to mediate the interaction with XerC. It is therefore unknown whether it has tyrosine recombinase activity or act as a regulator.</text>
</comment>
<comment type="sequence caution" evidence="4">
    <conflict type="erroneous initiation">
        <sequence resource="EMBL-CDS" id="CAC19443"/>
    </conflict>
</comment>
<keyword id="KW-0963">Cytoplasm</keyword>
<keyword id="KW-0229">DNA integration</keyword>
<keyword id="KW-0233">DNA recombination</keyword>
<keyword id="KW-0238">DNA-binding</keyword>
<dbReference type="EMBL" id="AJ277490">
    <property type="protein sequence ID" value="CAC19443.1"/>
    <property type="status" value="ALT_INIT"/>
    <property type="molecule type" value="Genomic_DNA"/>
</dbReference>
<dbReference type="SMR" id="Q9EUR3"/>
<dbReference type="GO" id="GO:0005737">
    <property type="term" value="C:cytoplasm"/>
    <property type="evidence" value="ECO:0007669"/>
    <property type="project" value="UniProtKB-SubCell"/>
</dbReference>
<dbReference type="GO" id="GO:0003677">
    <property type="term" value="F:DNA binding"/>
    <property type="evidence" value="ECO:0007669"/>
    <property type="project" value="UniProtKB-KW"/>
</dbReference>
<dbReference type="GO" id="GO:0009037">
    <property type="term" value="F:tyrosine-based site-specific recombinase activity"/>
    <property type="evidence" value="ECO:0007669"/>
    <property type="project" value="UniProtKB-UniRule"/>
</dbReference>
<dbReference type="GO" id="GO:0006313">
    <property type="term" value="P:DNA transposition"/>
    <property type="evidence" value="ECO:0007669"/>
    <property type="project" value="UniProtKB-UniRule"/>
</dbReference>
<dbReference type="CDD" id="cd01190">
    <property type="entry name" value="INT_StrepXerD_C_like"/>
    <property type="match status" value="1"/>
</dbReference>
<dbReference type="Gene3D" id="1.10.150.130">
    <property type="match status" value="1"/>
</dbReference>
<dbReference type="Gene3D" id="1.10.443.10">
    <property type="entry name" value="Intergrase catalytic core"/>
    <property type="match status" value="1"/>
</dbReference>
<dbReference type="HAMAP" id="MF_01817">
    <property type="entry name" value="Recomb_XerD_like"/>
    <property type="match status" value="1"/>
</dbReference>
<dbReference type="InterPro" id="IPR044068">
    <property type="entry name" value="CB"/>
</dbReference>
<dbReference type="InterPro" id="IPR011010">
    <property type="entry name" value="DNA_brk_join_enz"/>
</dbReference>
<dbReference type="InterPro" id="IPR013762">
    <property type="entry name" value="Integrase-like_cat_sf"/>
</dbReference>
<dbReference type="InterPro" id="IPR002104">
    <property type="entry name" value="Integrase_catalytic"/>
</dbReference>
<dbReference type="InterPro" id="IPR010998">
    <property type="entry name" value="Integrase_recombinase_N"/>
</dbReference>
<dbReference type="InterPro" id="IPR020876">
    <property type="entry name" value="Tyrosine_recombinase_XerD-like"/>
</dbReference>
<dbReference type="NCBIfam" id="NF002685">
    <property type="entry name" value="PRK02436.1"/>
    <property type="match status" value="1"/>
</dbReference>
<dbReference type="Pfam" id="PF00589">
    <property type="entry name" value="Phage_integrase"/>
    <property type="match status" value="1"/>
</dbReference>
<dbReference type="SUPFAM" id="SSF56349">
    <property type="entry name" value="DNA breaking-rejoining enzymes"/>
    <property type="match status" value="1"/>
</dbReference>
<dbReference type="PROSITE" id="PS51900">
    <property type="entry name" value="CB"/>
    <property type="match status" value="1"/>
</dbReference>
<dbReference type="PROSITE" id="PS51898">
    <property type="entry name" value="TYR_RECOMBINASE"/>
    <property type="match status" value="1"/>
</dbReference>
<feature type="chain" id="PRO_0000095438" description="Tyrosine recombinase XerD-like">
    <location>
        <begin position="1"/>
        <end position="244"/>
    </location>
</feature>
<feature type="domain" description="Core-binding (CB)" evidence="3">
    <location>
        <begin position="1"/>
        <end position="73"/>
    </location>
</feature>
<feature type="domain" description="Tyr recombinase" evidence="2">
    <location>
        <begin position="90"/>
        <end position="244"/>
    </location>
</feature>
<feature type="active site" evidence="2">
    <location>
        <position position="150"/>
    </location>
</feature>
<feature type="active site" evidence="2">
    <location>
        <position position="211"/>
    </location>
</feature>
<feature type="active site" description="O-(3'-phospho-DNA)-tyrosine intermediate" evidence="2">
    <location>
        <position position="243"/>
    </location>
</feature>
<organism>
    <name type="scientific">Streptococcus mitis</name>
    <dbReference type="NCBI Taxonomy" id="28037"/>
    <lineage>
        <taxon>Bacteria</taxon>
        <taxon>Bacillati</taxon>
        <taxon>Bacillota</taxon>
        <taxon>Bacilli</taxon>
        <taxon>Lactobacillales</taxon>
        <taxon>Streptococcaceae</taxon>
        <taxon>Streptococcus</taxon>
        <taxon>Streptococcus mitis group</taxon>
    </lineage>
</organism>
<protein>
    <recommendedName>
        <fullName evidence="1">Tyrosine recombinase XerD-like</fullName>
    </recommendedName>
</protein>
<evidence type="ECO:0000255" key="1">
    <source>
        <dbReference type="HAMAP-Rule" id="MF_01817"/>
    </source>
</evidence>
<evidence type="ECO:0000255" key="2">
    <source>
        <dbReference type="PROSITE-ProRule" id="PRU01246"/>
    </source>
</evidence>
<evidence type="ECO:0000255" key="3">
    <source>
        <dbReference type="PROSITE-ProRule" id="PRU01248"/>
    </source>
</evidence>
<evidence type="ECO:0000305" key="4"/>
<accession>Q9EUR3</accession>
<sequence length="244" mass="28152">MRDRISDFLEEKHGLSANSKQSYKYDLEQCLDIVGERISDTSLKIYQAQLANLKISAQKRKISGCNQFLYFLYHKGEMDSFDRLESAKQAEKKAEKPEILDLDSFWQGSDFPEGRLLALLILEMGLLPSEILALKVADINLDFQVLRIQKASQQRIVTIPTSLLSELEPLMGQTYLFERTGKAYSRQWAFRQLEAFVKEKGFPALSAQALREQFILRQIENKVDLYEIAKKSGLKTVLTLEKYR</sequence>
<name>XERDL_STRMT</name>
<reference key="1">
    <citation type="journal article" date="2002" name="J. Mol. Microbiol. Biotechnol.">
        <title>A XerD recombinase with unusual active site motifs in Streptococcus pneumoniae.</title>
        <authorList>
            <person name="Reichmann P."/>
            <person name="Hakenbeck R."/>
        </authorList>
    </citation>
    <scope>NUCLEOTIDE SEQUENCE [GENOMIC DNA]</scope>
    <source>
        <strain>476</strain>
    </source>
</reference>
<proteinExistence type="inferred from homology"/>
<gene>
    <name type="primary">xerD</name>
</gene>